<organism>
    <name type="scientific">Pseudomonas sp. (strain HR199 / DSM 7063)</name>
    <dbReference type="NCBI Taxonomy" id="86003"/>
    <lineage>
        <taxon>Bacteria</taxon>
        <taxon>Pseudomonadati</taxon>
        <taxon>Pseudomonadota</taxon>
        <taxon>Gammaproteobacteria</taxon>
        <taxon>Pseudomonadales</taxon>
        <taxon>Pseudomonadaceae</taxon>
        <taxon>Pseudomonas</taxon>
    </lineage>
</organism>
<sequence>MSILGLNGAPVGAEQLGSALDRMKKAHLEQGPANLELRLSRLDRAIAMLLENREAIADAVSADFGNRSREQTLLCDIAGSVASLKDSREHVAKWMEPEHHKAMFPGAEARVEFQPLGVVGVISPWNFPIVLAFGPLAGIFAAGNRAMLKPSELTPRTSALLAELIARYFDETELTTVLGDAEVGALFSAQPFDHLIFTGGTAVAKHIMRAAADNLVPVTLELGGKSPVIVSRSADMADVAQRVLTVKTFNAGQICLAPDYVLLPEESLDSFVAEATRFVAAMYPSLLDNPDYTSIINARNFDRLHRYLTDAQAKGGRVIEINPAAEELGDSGIRKIAPTLIVNVSDEMLVLNEEIFGPLLPIKTYRDFDSAIDYVNSKQRPLASYFFGEDAVEREQVLKRTVSGAVVVNDVMSHVMMDTLPFGGVGHSGMGAYHGIYGFRTFSHAKPVLVQSPVGESNLAMRAPYGEAIHGLLSVLLSTEC</sequence>
<gene>
    <name type="primary">calB</name>
</gene>
<evidence type="ECO:0000255" key="1">
    <source>
        <dbReference type="PROSITE-ProRule" id="PRU10007"/>
    </source>
</evidence>
<evidence type="ECO:0000269" key="2">
    <source>
    </source>
</evidence>
<evidence type="ECO:0000269" key="3">
    <source>
    </source>
</evidence>
<evidence type="ECO:0000305" key="4"/>
<proteinExistence type="evidence at protein level"/>
<protein>
    <recommendedName>
        <fullName>Coniferyl aldehyde dehydrogenase</fullName>
        <shortName>CALDH</shortName>
        <ecNumber>1.2.1.68</ecNumber>
    </recommendedName>
</protein>
<feature type="initiator methionine" description="Removed" evidence="3">
    <location>
        <position position="1"/>
    </location>
</feature>
<feature type="chain" id="PRO_0000056585" description="Coniferyl aldehyde dehydrogenase">
    <location>
        <begin position="2"/>
        <end position="481"/>
    </location>
</feature>
<feature type="active site" evidence="1">
    <location>
        <position position="221"/>
    </location>
</feature>
<feature type="active site" evidence="1">
    <location>
        <position position="255"/>
    </location>
</feature>
<dbReference type="EC" id="1.2.1.68"/>
<dbReference type="EMBL" id="AJ006231">
    <property type="protein sequence ID" value="CAA06926.1"/>
    <property type="molecule type" value="Genomic_DNA"/>
</dbReference>
<dbReference type="SMR" id="O86447"/>
<dbReference type="KEGG" id="ag:CAA06926"/>
<dbReference type="BRENDA" id="1.2.1.68">
    <property type="organism ID" value="5085"/>
</dbReference>
<dbReference type="GO" id="GO:0005737">
    <property type="term" value="C:cytoplasm"/>
    <property type="evidence" value="ECO:0007669"/>
    <property type="project" value="TreeGrafter"/>
</dbReference>
<dbReference type="GO" id="GO:0004029">
    <property type="term" value="F:aldehyde dehydrogenase (NAD+) activity"/>
    <property type="evidence" value="ECO:0007669"/>
    <property type="project" value="TreeGrafter"/>
</dbReference>
<dbReference type="GO" id="GO:0050269">
    <property type="term" value="F:coniferyl-aldehyde dehydrogenase [NAD(P)+] activity"/>
    <property type="evidence" value="ECO:0000314"/>
    <property type="project" value="UniProtKB"/>
</dbReference>
<dbReference type="GO" id="GO:0006081">
    <property type="term" value="P:aldehyde metabolic process"/>
    <property type="evidence" value="ECO:0007669"/>
    <property type="project" value="InterPro"/>
</dbReference>
<dbReference type="GO" id="GO:0042856">
    <property type="term" value="P:eugenol catabolic process"/>
    <property type="evidence" value="ECO:0000314"/>
    <property type="project" value="UniProtKB"/>
</dbReference>
<dbReference type="CDD" id="cd07133">
    <property type="entry name" value="ALDH_CALDH_CalB"/>
    <property type="match status" value="1"/>
</dbReference>
<dbReference type="FunFam" id="3.40.309.10:FF:000003">
    <property type="entry name" value="Aldehyde dehydrogenase"/>
    <property type="match status" value="1"/>
</dbReference>
<dbReference type="Gene3D" id="3.40.605.10">
    <property type="entry name" value="Aldehyde Dehydrogenase, Chain A, domain 1"/>
    <property type="match status" value="1"/>
</dbReference>
<dbReference type="Gene3D" id="3.40.309.10">
    <property type="entry name" value="Aldehyde Dehydrogenase, Chain A, domain 2"/>
    <property type="match status" value="1"/>
</dbReference>
<dbReference type="InterPro" id="IPR016161">
    <property type="entry name" value="Ald_DH/histidinol_DH"/>
</dbReference>
<dbReference type="InterPro" id="IPR016163">
    <property type="entry name" value="Ald_DH_C"/>
</dbReference>
<dbReference type="InterPro" id="IPR029510">
    <property type="entry name" value="Ald_DH_CS_GLU"/>
</dbReference>
<dbReference type="InterPro" id="IPR016162">
    <property type="entry name" value="Ald_DH_N"/>
</dbReference>
<dbReference type="InterPro" id="IPR015590">
    <property type="entry name" value="Aldehyde_DH_dom"/>
</dbReference>
<dbReference type="InterPro" id="IPR012394">
    <property type="entry name" value="Aldehyde_DH_NAD(P)"/>
</dbReference>
<dbReference type="PANTHER" id="PTHR43570">
    <property type="entry name" value="ALDEHYDE DEHYDROGENASE"/>
    <property type="match status" value="1"/>
</dbReference>
<dbReference type="PANTHER" id="PTHR43570:SF20">
    <property type="entry name" value="ALDEHYDE DEHYDROGENASE ALDX-RELATED"/>
    <property type="match status" value="1"/>
</dbReference>
<dbReference type="Pfam" id="PF00171">
    <property type="entry name" value="Aldedh"/>
    <property type="match status" value="1"/>
</dbReference>
<dbReference type="PIRSF" id="PIRSF036492">
    <property type="entry name" value="ALDH"/>
    <property type="match status" value="1"/>
</dbReference>
<dbReference type="SUPFAM" id="SSF53720">
    <property type="entry name" value="ALDH-like"/>
    <property type="match status" value="1"/>
</dbReference>
<dbReference type="PROSITE" id="PS00687">
    <property type="entry name" value="ALDEHYDE_DEHYDR_GLU"/>
    <property type="match status" value="1"/>
</dbReference>
<reference key="1">
    <citation type="journal article" date="1998" name="J. Bacteriol.">
        <title>Purification and characterization of the coniferyl aldehyde dehydrogenase from Pseudomonas sp. strain HR199 and molecular characterization of the gene.</title>
        <authorList>
            <person name="Achterholt S."/>
            <person name="Priefert H."/>
            <person name="Steinbuechel A."/>
        </authorList>
    </citation>
    <scope>NUCLEOTIDE SEQUENCE [GENOMIC DNA]</scope>
    <scope>PROTEIN SEQUENCE OF 2-20</scope>
    <scope>FUNCTION</scope>
    <scope>SUBUNIT</scope>
    <scope>CATALYTIC ACTIVITY</scope>
</reference>
<reference key="2">
    <citation type="journal article" date="2002" name="Appl. Environ. Microbiol.">
        <title>Biotransformation of eugenol to ferulic acid by a recombinant strain of Ralstonia eutropha H16.</title>
        <authorList>
            <person name="Overhage J."/>
            <person name="Steinbuechel A."/>
            <person name="Priefert H."/>
        </authorList>
    </citation>
    <scope>FUNCTION</scope>
</reference>
<keyword id="KW-0903">Direct protein sequencing</keyword>
<keyword id="KW-0520">NAD</keyword>
<keyword id="KW-0560">Oxidoreductase</keyword>
<name>CALB_PSEUH</name>
<comment type="function">
    <text evidence="2 3">Catalyzes the NAD(+)-dependent oxidation of coniferyl aldehyde to ferulic acid and which is induced during growth with eugenol as the carbon source.</text>
</comment>
<comment type="catalytic activity">
    <reaction evidence="3">
        <text>(E)-coniferaldehyde + NADP(+) + H2O = (E)-ferulate + NADPH + 2 H(+)</text>
        <dbReference type="Rhea" id="RHEA:23964"/>
        <dbReference type="ChEBI" id="CHEBI:15377"/>
        <dbReference type="ChEBI" id="CHEBI:15378"/>
        <dbReference type="ChEBI" id="CHEBI:16547"/>
        <dbReference type="ChEBI" id="CHEBI:29749"/>
        <dbReference type="ChEBI" id="CHEBI:57783"/>
        <dbReference type="ChEBI" id="CHEBI:58349"/>
        <dbReference type="EC" id="1.2.1.68"/>
    </reaction>
</comment>
<comment type="catalytic activity">
    <reaction evidence="3">
        <text>(E)-coniferaldehyde + NAD(+) + H2O = (E)-ferulate + NADH + 2 H(+)</text>
        <dbReference type="Rhea" id="RHEA:23968"/>
        <dbReference type="ChEBI" id="CHEBI:15377"/>
        <dbReference type="ChEBI" id="CHEBI:15378"/>
        <dbReference type="ChEBI" id="CHEBI:16547"/>
        <dbReference type="ChEBI" id="CHEBI:29749"/>
        <dbReference type="ChEBI" id="CHEBI:57540"/>
        <dbReference type="ChEBI" id="CHEBI:57945"/>
        <dbReference type="EC" id="1.2.1.68"/>
    </reaction>
</comment>
<comment type="subunit">
    <text evidence="3">Homodimer.</text>
</comment>
<comment type="miscellaneous">
    <text>The enzyme activity with NADP(+) is 4.3% of that with NAD(+).</text>
</comment>
<comment type="similarity">
    <text evidence="4">Belongs to the aldehyde dehydrogenase family.</text>
</comment>
<accession>O86447</accession>